<proteinExistence type="inferred from homology"/>
<protein>
    <recommendedName>
        <fullName evidence="1">Guanylate kinase</fullName>
        <ecNumber evidence="1">2.7.4.8</ecNumber>
    </recommendedName>
    <alternativeName>
        <fullName evidence="1">GMP kinase</fullName>
    </alternativeName>
</protein>
<name>KGUA_BACAN</name>
<accession>Q81WG7</accession>
<accession>Q6HUL5</accession>
<accession>Q6KNU9</accession>
<evidence type="ECO:0000255" key="1">
    <source>
        <dbReference type="HAMAP-Rule" id="MF_00328"/>
    </source>
</evidence>
<organism>
    <name type="scientific">Bacillus anthracis</name>
    <dbReference type="NCBI Taxonomy" id="1392"/>
    <lineage>
        <taxon>Bacteria</taxon>
        <taxon>Bacillati</taxon>
        <taxon>Bacillota</taxon>
        <taxon>Bacilli</taxon>
        <taxon>Bacillales</taxon>
        <taxon>Bacillaceae</taxon>
        <taxon>Bacillus</taxon>
        <taxon>Bacillus cereus group</taxon>
    </lineage>
</organism>
<reference key="1">
    <citation type="journal article" date="2003" name="Nature">
        <title>The genome sequence of Bacillus anthracis Ames and comparison to closely related bacteria.</title>
        <authorList>
            <person name="Read T.D."/>
            <person name="Peterson S.N."/>
            <person name="Tourasse N.J."/>
            <person name="Baillie L.W."/>
            <person name="Paulsen I.T."/>
            <person name="Nelson K.E."/>
            <person name="Tettelin H."/>
            <person name="Fouts D.E."/>
            <person name="Eisen J.A."/>
            <person name="Gill S.R."/>
            <person name="Holtzapple E.K."/>
            <person name="Okstad O.A."/>
            <person name="Helgason E."/>
            <person name="Rilstone J."/>
            <person name="Wu M."/>
            <person name="Kolonay J.F."/>
            <person name="Beanan M.J."/>
            <person name="Dodson R.J."/>
            <person name="Brinkac L.M."/>
            <person name="Gwinn M.L."/>
            <person name="DeBoy R.T."/>
            <person name="Madpu R."/>
            <person name="Daugherty S.C."/>
            <person name="Durkin A.S."/>
            <person name="Haft D.H."/>
            <person name="Nelson W.C."/>
            <person name="Peterson J.D."/>
            <person name="Pop M."/>
            <person name="Khouri H.M."/>
            <person name="Radune D."/>
            <person name="Benton J.L."/>
            <person name="Mahamoud Y."/>
            <person name="Jiang L."/>
            <person name="Hance I.R."/>
            <person name="Weidman J.F."/>
            <person name="Berry K.J."/>
            <person name="Plaut R.D."/>
            <person name="Wolf A.M."/>
            <person name="Watkins K.L."/>
            <person name="Nierman W.C."/>
            <person name="Hazen A."/>
            <person name="Cline R.T."/>
            <person name="Redmond C."/>
            <person name="Thwaite J.E."/>
            <person name="White O."/>
            <person name="Salzberg S.L."/>
            <person name="Thomason B."/>
            <person name="Friedlander A.M."/>
            <person name="Koehler T.M."/>
            <person name="Hanna P.C."/>
            <person name="Kolstoe A.-B."/>
            <person name="Fraser C.M."/>
        </authorList>
    </citation>
    <scope>NUCLEOTIDE SEQUENCE [LARGE SCALE GENOMIC DNA]</scope>
    <source>
        <strain>Ames / isolate Porton</strain>
    </source>
</reference>
<reference key="2">
    <citation type="journal article" date="2009" name="J. Bacteriol.">
        <title>The complete genome sequence of Bacillus anthracis Ames 'Ancestor'.</title>
        <authorList>
            <person name="Ravel J."/>
            <person name="Jiang L."/>
            <person name="Stanley S.T."/>
            <person name="Wilson M.R."/>
            <person name="Decker R.S."/>
            <person name="Read T.D."/>
            <person name="Worsham P."/>
            <person name="Keim P.S."/>
            <person name="Salzberg S.L."/>
            <person name="Fraser-Liggett C.M."/>
            <person name="Rasko D.A."/>
        </authorList>
    </citation>
    <scope>NUCLEOTIDE SEQUENCE [LARGE SCALE GENOMIC DNA]</scope>
    <source>
        <strain>Ames ancestor</strain>
    </source>
</reference>
<reference key="3">
    <citation type="submission" date="2004-01" db="EMBL/GenBank/DDBJ databases">
        <title>Complete genome sequence of Bacillus anthracis Sterne.</title>
        <authorList>
            <person name="Brettin T.S."/>
            <person name="Bruce D."/>
            <person name="Challacombe J.F."/>
            <person name="Gilna P."/>
            <person name="Han C."/>
            <person name="Hill K."/>
            <person name="Hitchcock P."/>
            <person name="Jackson P."/>
            <person name="Keim P."/>
            <person name="Longmire J."/>
            <person name="Lucas S."/>
            <person name="Okinaka R."/>
            <person name="Richardson P."/>
            <person name="Rubin E."/>
            <person name="Tice H."/>
        </authorList>
    </citation>
    <scope>NUCLEOTIDE SEQUENCE [LARGE SCALE GENOMIC DNA]</scope>
    <source>
        <strain>Sterne</strain>
    </source>
</reference>
<feature type="chain" id="PRO_0000170490" description="Guanylate kinase">
    <location>
        <begin position="1"/>
        <end position="205"/>
    </location>
</feature>
<feature type="domain" description="Guanylate kinase-like" evidence="1">
    <location>
        <begin position="6"/>
        <end position="185"/>
    </location>
</feature>
<feature type="binding site" evidence="1">
    <location>
        <begin position="13"/>
        <end position="20"/>
    </location>
    <ligand>
        <name>ATP</name>
        <dbReference type="ChEBI" id="CHEBI:30616"/>
    </ligand>
</feature>
<comment type="function">
    <text evidence="1">Essential for recycling GMP and indirectly, cGMP.</text>
</comment>
<comment type="catalytic activity">
    <reaction evidence="1">
        <text>GMP + ATP = GDP + ADP</text>
        <dbReference type="Rhea" id="RHEA:20780"/>
        <dbReference type="ChEBI" id="CHEBI:30616"/>
        <dbReference type="ChEBI" id="CHEBI:58115"/>
        <dbReference type="ChEBI" id="CHEBI:58189"/>
        <dbReference type="ChEBI" id="CHEBI:456216"/>
        <dbReference type="EC" id="2.7.4.8"/>
    </reaction>
</comment>
<comment type="subcellular location">
    <subcellularLocation>
        <location evidence="1">Cytoplasm</location>
    </subcellularLocation>
</comment>
<comment type="similarity">
    <text evidence="1">Belongs to the guanylate kinase family.</text>
</comment>
<sequence length="205" mass="23677">MRSRRGLLIVLSGPSGVGKGTVRKELFSHEDTRFQYSISVTTRKPREGEVDGVDYFFKEREEFEEMIRNEKLLEWAEFVGNYYGTPIDYVEKTLQEGKDVFLEIEVQGAIQVKKAFPEGVFIFLAPPSLSELKNRIVGRGTETEDVIENRLTVAKEEIDMMDAYDYVVENDQVELACERIKAIVVGEHCRRERVAKYYKEMTEGL</sequence>
<gene>
    <name evidence="1" type="primary">gmk</name>
    <name type="ordered locus">BA_4009</name>
    <name type="ordered locus">GBAA_4009</name>
    <name type="ordered locus">BAS3722</name>
</gene>
<keyword id="KW-0067">ATP-binding</keyword>
<keyword id="KW-0963">Cytoplasm</keyword>
<keyword id="KW-0418">Kinase</keyword>
<keyword id="KW-0547">Nucleotide-binding</keyword>
<keyword id="KW-1185">Reference proteome</keyword>
<keyword id="KW-0808">Transferase</keyword>
<dbReference type="EC" id="2.7.4.8" evidence="1"/>
<dbReference type="EMBL" id="AE016879">
    <property type="protein sequence ID" value="AAP27737.1"/>
    <property type="molecule type" value="Genomic_DNA"/>
</dbReference>
<dbReference type="EMBL" id="AE017334">
    <property type="protein sequence ID" value="AAT33126.1"/>
    <property type="molecule type" value="Genomic_DNA"/>
</dbReference>
<dbReference type="EMBL" id="AE017225">
    <property type="protein sequence ID" value="AAT56024.1"/>
    <property type="molecule type" value="Genomic_DNA"/>
</dbReference>
<dbReference type="RefSeq" id="NP_846251.1">
    <property type="nucleotide sequence ID" value="NC_003997.3"/>
</dbReference>
<dbReference type="RefSeq" id="WP_001257738.1">
    <property type="nucleotide sequence ID" value="NZ_WXXJ01000026.1"/>
</dbReference>
<dbReference type="RefSeq" id="YP_029973.1">
    <property type="nucleotide sequence ID" value="NC_005945.1"/>
</dbReference>
<dbReference type="SMR" id="Q81WG7"/>
<dbReference type="STRING" id="261594.GBAA_4009"/>
<dbReference type="DNASU" id="1087515"/>
<dbReference type="GeneID" id="93007240"/>
<dbReference type="KEGG" id="ban:BA_4009"/>
<dbReference type="KEGG" id="bar:GBAA_4009"/>
<dbReference type="KEGG" id="bat:BAS3722"/>
<dbReference type="PATRIC" id="fig|198094.11.peg.3979"/>
<dbReference type="eggNOG" id="COG0194">
    <property type="taxonomic scope" value="Bacteria"/>
</dbReference>
<dbReference type="HOGENOM" id="CLU_001715_1_2_9"/>
<dbReference type="OMA" id="EWAVVHG"/>
<dbReference type="OrthoDB" id="9808150at2"/>
<dbReference type="Proteomes" id="UP000000427">
    <property type="component" value="Chromosome"/>
</dbReference>
<dbReference type="Proteomes" id="UP000000594">
    <property type="component" value="Chromosome"/>
</dbReference>
<dbReference type="GO" id="GO:0005829">
    <property type="term" value="C:cytosol"/>
    <property type="evidence" value="ECO:0007669"/>
    <property type="project" value="TreeGrafter"/>
</dbReference>
<dbReference type="GO" id="GO:0005524">
    <property type="term" value="F:ATP binding"/>
    <property type="evidence" value="ECO:0007669"/>
    <property type="project" value="UniProtKB-UniRule"/>
</dbReference>
<dbReference type="GO" id="GO:0004385">
    <property type="term" value="F:guanylate kinase activity"/>
    <property type="evidence" value="ECO:0007669"/>
    <property type="project" value="UniProtKB-UniRule"/>
</dbReference>
<dbReference type="CDD" id="cd00071">
    <property type="entry name" value="GMPK"/>
    <property type="match status" value="1"/>
</dbReference>
<dbReference type="FunFam" id="3.40.50.300:FF:000855">
    <property type="entry name" value="Guanylate kinase"/>
    <property type="match status" value="1"/>
</dbReference>
<dbReference type="FunFam" id="3.30.63.10:FF:000002">
    <property type="entry name" value="Guanylate kinase 1"/>
    <property type="match status" value="1"/>
</dbReference>
<dbReference type="Gene3D" id="3.30.63.10">
    <property type="entry name" value="Guanylate Kinase phosphate binding domain"/>
    <property type="match status" value="1"/>
</dbReference>
<dbReference type="Gene3D" id="3.40.50.300">
    <property type="entry name" value="P-loop containing nucleotide triphosphate hydrolases"/>
    <property type="match status" value="1"/>
</dbReference>
<dbReference type="HAMAP" id="MF_00328">
    <property type="entry name" value="Guanylate_kinase"/>
    <property type="match status" value="1"/>
</dbReference>
<dbReference type="InterPro" id="IPR008145">
    <property type="entry name" value="GK/Ca_channel_bsu"/>
</dbReference>
<dbReference type="InterPro" id="IPR008144">
    <property type="entry name" value="Guanylate_kin-like_dom"/>
</dbReference>
<dbReference type="InterPro" id="IPR017665">
    <property type="entry name" value="Guanylate_kinase"/>
</dbReference>
<dbReference type="InterPro" id="IPR020590">
    <property type="entry name" value="Guanylate_kinase_CS"/>
</dbReference>
<dbReference type="InterPro" id="IPR027417">
    <property type="entry name" value="P-loop_NTPase"/>
</dbReference>
<dbReference type="NCBIfam" id="TIGR03263">
    <property type="entry name" value="guanyl_kin"/>
    <property type="match status" value="1"/>
</dbReference>
<dbReference type="PANTHER" id="PTHR23117:SF13">
    <property type="entry name" value="GUANYLATE KINASE"/>
    <property type="match status" value="1"/>
</dbReference>
<dbReference type="PANTHER" id="PTHR23117">
    <property type="entry name" value="GUANYLATE KINASE-RELATED"/>
    <property type="match status" value="1"/>
</dbReference>
<dbReference type="Pfam" id="PF00625">
    <property type="entry name" value="Guanylate_kin"/>
    <property type="match status" value="1"/>
</dbReference>
<dbReference type="SMART" id="SM00072">
    <property type="entry name" value="GuKc"/>
    <property type="match status" value="1"/>
</dbReference>
<dbReference type="SUPFAM" id="SSF52540">
    <property type="entry name" value="P-loop containing nucleoside triphosphate hydrolases"/>
    <property type="match status" value="1"/>
</dbReference>
<dbReference type="PROSITE" id="PS00856">
    <property type="entry name" value="GUANYLATE_KINASE_1"/>
    <property type="match status" value="1"/>
</dbReference>
<dbReference type="PROSITE" id="PS50052">
    <property type="entry name" value="GUANYLATE_KINASE_2"/>
    <property type="match status" value="1"/>
</dbReference>